<comment type="function">
    <text evidence="2 3">Multifunctional cell surface receptor that binds VLDL and transports it into cells by endocytosis and therefore plays an important role in energy metabolism. Also binds to a wide range of other molecules including Reelin/RELN or apolipoprotein E/APOE-containing ligands as well as clusterin/CLU. In the off-state of the pathway, forms homooligomers or heterooligomers with LRP8. Upon binding to ligands, homooligomers are rearranged to higher order receptor clusters that transmit the extracellular RELN signal to intracellular signaling processes by binding to DAB1 (By similarity). This interaction results in phosphorylation of DAB1 leading to the ultimate cell responses required for the correct positioning of newly generated neurons. Later, mediates a stop signal for migrating neurons, preventing them from entering the marginal zone (By similarity).</text>
</comment>
<comment type="subunit">
    <text evidence="2 3">Homooligomer. Binds to the extracellular matrix protein Reelin/RELN. Interacts with LRP8 (By similarity). Interacts with LDLRAP1 (By similarity). Interacts with SNX17 (By similarity). Interacts with DAB1. Interacts with PCSK9. Interacts with PAFAH1B3 and PAFAH1B2, the catalytic complex of (PAF-AH (I)) heterotetrameric enzyme; these interactions may modulate the Reelin pathway. Interacts with STX5; this interaction mediates VLDLR translocation from the endoplasmic reticulum to the plasma membrane. Interacts with CLU (By similarity).</text>
</comment>
<comment type="subcellular location">
    <subcellularLocation>
        <location>Membrane</location>
        <topology>Single-pass type I membrane protein</topology>
    </subcellularLocation>
    <subcellularLocation>
        <location>Membrane</location>
        <location>Clathrin-coated pit</location>
        <topology>Single-pass type I membrane protein</topology>
    </subcellularLocation>
</comment>
<comment type="tissue specificity">
    <text>Abundant in soleus, gastrocnemicus, heart muscle, placenta, brain, lung and white fat. Less in aorta, ovary, kidney, spleen, adrenal gland and thymus.</text>
</comment>
<comment type="PTM">
    <text evidence="1">Ubiquitinated at Lys-839 by MYLIP leading to degradation.</text>
</comment>
<dbReference type="EMBL" id="L35767">
    <property type="protein sequence ID" value="AAA42341.1"/>
    <property type="molecule type" value="mRNA"/>
</dbReference>
<dbReference type="SMR" id="P98166"/>
<dbReference type="FunCoup" id="P98166">
    <property type="interactions" value="862"/>
</dbReference>
<dbReference type="STRING" id="10116.ENSRNOP00000036229"/>
<dbReference type="GlyCosmos" id="P98166">
    <property type="glycosylation" value="3 sites, No reported glycans"/>
</dbReference>
<dbReference type="GlyGen" id="P98166">
    <property type="glycosylation" value="3 sites"/>
</dbReference>
<dbReference type="PhosphoSitePlus" id="P98166"/>
<dbReference type="jPOST" id="P98166"/>
<dbReference type="PaxDb" id="10116-ENSRNOP00000036229"/>
<dbReference type="UCSC" id="RGD:3963">
    <property type="organism name" value="rat"/>
</dbReference>
<dbReference type="AGR" id="RGD:3963"/>
<dbReference type="RGD" id="3963">
    <property type="gene designation" value="Vldlr"/>
</dbReference>
<dbReference type="eggNOG" id="KOG1215">
    <property type="taxonomic scope" value="Eukaryota"/>
</dbReference>
<dbReference type="InParanoid" id="P98166"/>
<dbReference type="PhylomeDB" id="P98166"/>
<dbReference type="Reactome" id="R-RNO-8866376">
    <property type="pathway name" value="Reelin signalling pathway"/>
</dbReference>
<dbReference type="Reactome" id="R-RNO-8866427">
    <property type="pathway name" value="VLDLR internalisation and degradation"/>
</dbReference>
<dbReference type="Reactome" id="R-RNO-8964046">
    <property type="pathway name" value="VLDL clearance"/>
</dbReference>
<dbReference type="PRO" id="PR:P98166"/>
<dbReference type="Proteomes" id="UP000002494">
    <property type="component" value="Unplaced"/>
</dbReference>
<dbReference type="GO" id="GO:0045177">
    <property type="term" value="C:apical part of cell"/>
    <property type="evidence" value="ECO:0000314"/>
    <property type="project" value="RGD"/>
</dbReference>
<dbReference type="GO" id="GO:0009986">
    <property type="term" value="C:cell surface"/>
    <property type="evidence" value="ECO:0000314"/>
    <property type="project" value="RGD"/>
</dbReference>
<dbReference type="GO" id="GO:0005905">
    <property type="term" value="C:clathrin-coated pit"/>
    <property type="evidence" value="ECO:0007669"/>
    <property type="project" value="UniProtKB-SubCell"/>
</dbReference>
<dbReference type="GO" id="GO:0005615">
    <property type="term" value="C:extracellular space"/>
    <property type="evidence" value="ECO:0000266"/>
    <property type="project" value="RGD"/>
</dbReference>
<dbReference type="GO" id="GO:0098978">
    <property type="term" value="C:glutamatergic synapse"/>
    <property type="evidence" value="ECO:0000266"/>
    <property type="project" value="RGD"/>
</dbReference>
<dbReference type="GO" id="GO:0016020">
    <property type="term" value="C:membrane"/>
    <property type="evidence" value="ECO:0000266"/>
    <property type="project" value="RGD"/>
</dbReference>
<dbReference type="GO" id="GO:0048471">
    <property type="term" value="C:perinuclear region of cytoplasm"/>
    <property type="evidence" value="ECO:0000314"/>
    <property type="project" value="RGD"/>
</dbReference>
<dbReference type="GO" id="GO:0005886">
    <property type="term" value="C:plasma membrane"/>
    <property type="evidence" value="ECO:0000318"/>
    <property type="project" value="GO_Central"/>
</dbReference>
<dbReference type="GO" id="GO:0043235">
    <property type="term" value="C:receptor complex"/>
    <property type="evidence" value="ECO:0000266"/>
    <property type="project" value="RGD"/>
</dbReference>
<dbReference type="GO" id="GO:0045202">
    <property type="term" value="C:synapse"/>
    <property type="evidence" value="ECO:0000266"/>
    <property type="project" value="RGD"/>
</dbReference>
<dbReference type="GO" id="GO:0034361">
    <property type="term" value="C:very-low-density lipoprotein particle"/>
    <property type="evidence" value="ECO:0007669"/>
    <property type="project" value="UniProtKB-KW"/>
</dbReference>
<dbReference type="GO" id="GO:0034185">
    <property type="term" value="F:apolipoprotein binding"/>
    <property type="evidence" value="ECO:0000266"/>
    <property type="project" value="RGD"/>
</dbReference>
<dbReference type="GO" id="GO:0005509">
    <property type="term" value="F:calcium ion binding"/>
    <property type="evidence" value="ECO:0007669"/>
    <property type="project" value="InterPro"/>
</dbReference>
<dbReference type="GO" id="GO:0048306">
    <property type="term" value="F:calcium-dependent protein binding"/>
    <property type="evidence" value="ECO:0000266"/>
    <property type="project" value="RGD"/>
</dbReference>
<dbReference type="GO" id="GO:0038024">
    <property type="term" value="F:cargo receptor activity"/>
    <property type="evidence" value="ECO:0000266"/>
    <property type="project" value="RGD"/>
</dbReference>
<dbReference type="GO" id="GO:0030296">
    <property type="term" value="F:protein tyrosine kinase activator activity"/>
    <property type="evidence" value="ECO:0000304"/>
    <property type="project" value="RGD"/>
</dbReference>
<dbReference type="GO" id="GO:0038025">
    <property type="term" value="F:reelin receptor activity"/>
    <property type="evidence" value="ECO:0000266"/>
    <property type="project" value="RGD"/>
</dbReference>
<dbReference type="GO" id="GO:0034189">
    <property type="term" value="F:very-low-density lipoprotein particle binding"/>
    <property type="evidence" value="ECO:0000266"/>
    <property type="project" value="RGD"/>
</dbReference>
<dbReference type="GO" id="GO:0030229">
    <property type="term" value="F:very-low-density lipoprotein particle receptor activity"/>
    <property type="evidence" value="ECO:0000250"/>
    <property type="project" value="BHF-UCL"/>
</dbReference>
<dbReference type="GO" id="GO:0007166">
    <property type="term" value="P:cell surface receptor signaling pathway"/>
    <property type="evidence" value="ECO:0000304"/>
    <property type="project" value="RGD"/>
</dbReference>
<dbReference type="GO" id="GO:0042149">
    <property type="term" value="P:cellular response to glucose starvation"/>
    <property type="evidence" value="ECO:0000270"/>
    <property type="project" value="RGD"/>
</dbReference>
<dbReference type="GO" id="GO:0071456">
    <property type="term" value="P:cellular response to hypoxia"/>
    <property type="evidence" value="ECO:0000314"/>
    <property type="project" value="RGD"/>
</dbReference>
<dbReference type="GO" id="GO:0032869">
    <property type="term" value="P:cellular response to insulin stimulus"/>
    <property type="evidence" value="ECO:0000270"/>
    <property type="project" value="RGD"/>
</dbReference>
<dbReference type="GO" id="GO:0071347">
    <property type="term" value="P:cellular response to interleukin-1"/>
    <property type="evidence" value="ECO:0000270"/>
    <property type="project" value="RGD"/>
</dbReference>
<dbReference type="GO" id="GO:0071222">
    <property type="term" value="P:cellular response to lipopolysaccharide"/>
    <property type="evidence" value="ECO:0000270"/>
    <property type="project" value="RGD"/>
</dbReference>
<dbReference type="GO" id="GO:0021987">
    <property type="term" value="P:cerebral cortex development"/>
    <property type="evidence" value="ECO:0000270"/>
    <property type="project" value="RGD"/>
</dbReference>
<dbReference type="GO" id="GO:0008203">
    <property type="term" value="P:cholesterol metabolic process"/>
    <property type="evidence" value="ECO:0007669"/>
    <property type="project" value="UniProtKB-KW"/>
</dbReference>
<dbReference type="GO" id="GO:0048813">
    <property type="term" value="P:dendrite morphogenesis"/>
    <property type="evidence" value="ECO:0000266"/>
    <property type="project" value="RGD"/>
</dbReference>
<dbReference type="GO" id="GO:0034436">
    <property type="term" value="P:glycoprotein transport"/>
    <property type="evidence" value="ECO:0000266"/>
    <property type="project" value="RGD"/>
</dbReference>
<dbReference type="GO" id="GO:0007507">
    <property type="term" value="P:heart development"/>
    <property type="evidence" value="ECO:0000270"/>
    <property type="project" value="RGD"/>
</dbReference>
<dbReference type="GO" id="GO:0006869">
    <property type="term" value="P:lipid transport"/>
    <property type="evidence" value="ECO:0007669"/>
    <property type="project" value="UniProtKB-KW"/>
</dbReference>
<dbReference type="GO" id="GO:1900006">
    <property type="term" value="P:positive regulation of dendrite development"/>
    <property type="evidence" value="ECO:0000266"/>
    <property type="project" value="RGD"/>
</dbReference>
<dbReference type="GO" id="GO:0006898">
    <property type="term" value="P:receptor-mediated endocytosis"/>
    <property type="evidence" value="ECO:0000266"/>
    <property type="project" value="RGD"/>
</dbReference>
<dbReference type="GO" id="GO:0038026">
    <property type="term" value="P:reelin-mediated signaling pathway"/>
    <property type="evidence" value="ECO:0000266"/>
    <property type="project" value="RGD"/>
</dbReference>
<dbReference type="GO" id="GO:0051963">
    <property type="term" value="P:regulation of synapse assembly"/>
    <property type="evidence" value="ECO:0000266"/>
    <property type="project" value="RGD"/>
</dbReference>
<dbReference type="GO" id="GO:0009725">
    <property type="term" value="P:response to hormone"/>
    <property type="evidence" value="ECO:0000270"/>
    <property type="project" value="RGD"/>
</dbReference>
<dbReference type="GO" id="GO:0001666">
    <property type="term" value="P:response to hypoxia"/>
    <property type="evidence" value="ECO:0000270"/>
    <property type="project" value="RGD"/>
</dbReference>
<dbReference type="GO" id="GO:0032496">
    <property type="term" value="P:response to lipopolysaccharide"/>
    <property type="evidence" value="ECO:0000270"/>
    <property type="project" value="RGD"/>
</dbReference>
<dbReference type="GO" id="GO:0007584">
    <property type="term" value="P:response to nutrient"/>
    <property type="evidence" value="ECO:0000270"/>
    <property type="project" value="RGD"/>
</dbReference>
<dbReference type="GO" id="GO:0009410">
    <property type="term" value="P:response to xenobiotic stimulus"/>
    <property type="evidence" value="ECO:0000270"/>
    <property type="project" value="RGD"/>
</dbReference>
<dbReference type="GO" id="GO:0021517">
    <property type="term" value="P:ventral spinal cord development"/>
    <property type="evidence" value="ECO:0000266"/>
    <property type="project" value="RGD"/>
</dbReference>
<dbReference type="GO" id="GO:0034447">
    <property type="term" value="P:very-low-density lipoprotein particle clearance"/>
    <property type="evidence" value="ECO:0000250"/>
    <property type="project" value="BHF-UCL"/>
</dbReference>
<dbReference type="CDD" id="cd00054">
    <property type="entry name" value="EGF_CA"/>
    <property type="match status" value="1"/>
</dbReference>
<dbReference type="CDD" id="cd00112">
    <property type="entry name" value="LDLa"/>
    <property type="match status" value="8"/>
</dbReference>
<dbReference type="FunFam" id="2.10.25.10:FF:000009">
    <property type="entry name" value="Low-density lipoprotein receptor isoform 1"/>
    <property type="match status" value="1"/>
</dbReference>
<dbReference type="FunFam" id="2.10.25.10:FF:000052">
    <property type="entry name" value="low-density lipoprotein receptor isoform X1"/>
    <property type="match status" value="1"/>
</dbReference>
<dbReference type="FunFam" id="2.120.10.30:FF:000002">
    <property type="entry name" value="low-density lipoprotein receptor isoform X1"/>
    <property type="match status" value="1"/>
</dbReference>
<dbReference type="FunFam" id="4.10.400.10:FF:000025">
    <property type="entry name" value="Very low density lipoprotein receptor"/>
    <property type="match status" value="1"/>
</dbReference>
<dbReference type="FunFam" id="4.10.400.10:FF:000038">
    <property type="entry name" value="Very low density lipoprotein receptor"/>
    <property type="match status" value="1"/>
</dbReference>
<dbReference type="FunFam" id="4.10.400.10:FF:000043">
    <property type="entry name" value="Very low density lipoprotein receptor"/>
    <property type="match status" value="1"/>
</dbReference>
<dbReference type="FunFam" id="4.10.400.10:FF:000046">
    <property type="entry name" value="Very low density lipoprotein receptor"/>
    <property type="match status" value="1"/>
</dbReference>
<dbReference type="FunFam" id="4.10.400.10:FF:000049">
    <property type="entry name" value="Very low density lipoprotein receptor"/>
    <property type="match status" value="1"/>
</dbReference>
<dbReference type="FunFam" id="4.10.400.10:FF:000051">
    <property type="entry name" value="Very low density lipoprotein receptor"/>
    <property type="match status" value="1"/>
</dbReference>
<dbReference type="FunFam" id="4.10.400.10:FF:000053">
    <property type="entry name" value="Very low density lipoprotein receptor"/>
    <property type="match status" value="1"/>
</dbReference>
<dbReference type="FunFam" id="4.10.400.10:FF:000057">
    <property type="entry name" value="Very low density lipoprotein receptor"/>
    <property type="match status" value="1"/>
</dbReference>
<dbReference type="Gene3D" id="2.10.25.10">
    <property type="entry name" value="Laminin"/>
    <property type="match status" value="3"/>
</dbReference>
<dbReference type="Gene3D" id="4.10.400.10">
    <property type="entry name" value="Low-density Lipoprotein Receptor"/>
    <property type="match status" value="8"/>
</dbReference>
<dbReference type="Gene3D" id="2.120.10.30">
    <property type="entry name" value="TolB, C-terminal domain"/>
    <property type="match status" value="1"/>
</dbReference>
<dbReference type="InterPro" id="IPR011042">
    <property type="entry name" value="6-blade_b-propeller_TolB-like"/>
</dbReference>
<dbReference type="InterPro" id="IPR001881">
    <property type="entry name" value="EGF-like_Ca-bd_dom"/>
</dbReference>
<dbReference type="InterPro" id="IPR000742">
    <property type="entry name" value="EGF-like_dom"/>
</dbReference>
<dbReference type="InterPro" id="IPR000152">
    <property type="entry name" value="EGF-type_Asp/Asn_hydroxyl_site"/>
</dbReference>
<dbReference type="InterPro" id="IPR018097">
    <property type="entry name" value="EGF_Ca-bd_CS"/>
</dbReference>
<dbReference type="InterPro" id="IPR009030">
    <property type="entry name" value="Growth_fac_rcpt_cys_sf"/>
</dbReference>
<dbReference type="InterPro" id="IPR036055">
    <property type="entry name" value="LDL_receptor-like_sf"/>
</dbReference>
<dbReference type="InterPro" id="IPR051221">
    <property type="entry name" value="LDLR-related"/>
</dbReference>
<dbReference type="InterPro" id="IPR023415">
    <property type="entry name" value="LDLR_class-A_CS"/>
</dbReference>
<dbReference type="InterPro" id="IPR000033">
    <property type="entry name" value="LDLR_classB_rpt"/>
</dbReference>
<dbReference type="InterPro" id="IPR002172">
    <property type="entry name" value="LDrepeatLR_classA_rpt"/>
</dbReference>
<dbReference type="InterPro" id="IPR049883">
    <property type="entry name" value="NOTCH1_EGF-like"/>
</dbReference>
<dbReference type="PANTHER" id="PTHR22722:SF15">
    <property type="entry name" value="LOW-DENSITY LIPOPROTEIN RECEPTOR-RELATED"/>
    <property type="match status" value="1"/>
</dbReference>
<dbReference type="PANTHER" id="PTHR22722">
    <property type="entry name" value="LOW-DENSITY LIPOPROTEIN RECEPTOR-RELATED PROTEIN 2-RELATED"/>
    <property type="match status" value="1"/>
</dbReference>
<dbReference type="Pfam" id="PF07645">
    <property type="entry name" value="EGF_CA"/>
    <property type="match status" value="1"/>
</dbReference>
<dbReference type="Pfam" id="PF14670">
    <property type="entry name" value="FXa_inhibition"/>
    <property type="match status" value="2"/>
</dbReference>
<dbReference type="Pfam" id="PF00057">
    <property type="entry name" value="Ldl_recept_a"/>
    <property type="match status" value="8"/>
</dbReference>
<dbReference type="Pfam" id="PF00058">
    <property type="entry name" value="Ldl_recept_b"/>
    <property type="match status" value="5"/>
</dbReference>
<dbReference type="PRINTS" id="PR00261">
    <property type="entry name" value="LDLRECEPTOR"/>
</dbReference>
<dbReference type="SMART" id="SM00181">
    <property type="entry name" value="EGF"/>
    <property type="match status" value="6"/>
</dbReference>
<dbReference type="SMART" id="SM00179">
    <property type="entry name" value="EGF_CA"/>
    <property type="match status" value="2"/>
</dbReference>
<dbReference type="SMART" id="SM00192">
    <property type="entry name" value="LDLa"/>
    <property type="match status" value="8"/>
</dbReference>
<dbReference type="SMART" id="SM00135">
    <property type="entry name" value="LY"/>
    <property type="match status" value="5"/>
</dbReference>
<dbReference type="SUPFAM" id="SSF57184">
    <property type="entry name" value="Growth factor receptor domain"/>
    <property type="match status" value="1"/>
</dbReference>
<dbReference type="SUPFAM" id="SSF57424">
    <property type="entry name" value="LDL receptor-like module"/>
    <property type="match status" value="8"/>
</dbReference>
<dbReference type="SUPFAM" id="SSF63825">
    <property type="entry name" value="YWTD domain"/>
    <property type="match status" value="1"/>
</dbReference>
<dbReference type="PROSITE" id="PS00010">
    <property type="entry name" value="ASX_HYDROXYL"/>
    <property type="match status" value="2"/>
</dbReference>
<dbReference type="PROSITE" id="PS01186">
    <property type="entry name" value="EGF_2"/>
    <property type="match status" value="3"/>
</dbReference>
<dbReference type="PROSITE" id="PS50026">
    <property type="entry name" value="EGF_3"/>
    <property type="match status" value="2"/>
</dbReference>
<dbReference type="PROSITE" id="PS01187">
    <property type="entry name" value="EGF_CA"/>
    <property type="match status" value="1"/>
</dbReference>
<dbReference type="PROSITE" id="PS01209">
    <property type="entry name" value="LDLRA_1"/>
    <property type="match status" value="8"/>
</dbReference>
<dbReference type="PROSITE" id="PS50068">
    <property type="entry name" value="LDLRA_2"/>
    <property type="match status" value="8"/>
</dbReference>
<dbReference type="PROSITE" id="PS51120">
    <property type="entry name" value="LDLRB"/>
    <property type="match status" value="5"/>
</dbReference>
<proteinExistence type="evidence at transcript level"/>
<accession>P98166</accession>
<name>VLDLR_RAT</name>
<feature type="signal peptide" evidence="4">
    <location>
        <begin position="1"/>
        <end position="27"/>
    </location>
</feature>
<feature type="chain" id="PRO_0000017346" description="Very low-density lipoprotein receptor">
    <location>
        <begin position="28"/>
        <end position="873"/>
    </location>
</feature>
<feature type="topological domain" description="Extracellular" evidence="4">
    <location>
        <begin position="28"/>
        <end position="797"/>
    </location>
</feature>
<feature type="transmembrane region" description="Helical" evidence="4">
    <location>
        <begin position="798"/>
        <end position="819"/>
    </location>
</feature>
<feature type="topological domain" description="Cytoplasmic" evidence="4">
    <location>
        <begin position="820"/>
        <end position="873"/>
    </location>
</feature>
<feature type="domain" description="LDL-receptor class A 1" evidence="6">
    <location>
        <begin position="31"/>
        <end position="69"/>
    </location>
</feature>
<feature type="domain" description="LDL-receptor class A 2" evidence="6">
    <location>
        <begin position="70"/>
        <end position="110"/>
    </location>
</feature>
<feature type="domain" description="LDL-receptor class A 3" evidence="6">
    <location>
        <begin position="111"/>
        <end position="151"/>
    </location>
</feature>
<feature type="domain" description="LDL-receptor class A 4" evidence="6">
    <location>
        <begin position="152"/>
        <end position="190"/>
    </location>
</feature>
<feature type="domain" description="LDL-receptor class A 5" evidence="6">
    <location>
        <begin position="191"/>
        <end position="231"/>
    </location>
</feature>
<feature type="domain" description="LDL-receptor class A 6" evidence="6">
    <location>
        <begin position="237"/>
        <end position="275"/>
    </location>
</feature>
<feature type="domain" description="LDL-receptor class A 7" evidence="6">
    <location>
        <begin position="276"/>
        <end position="314"/>
    </location>
</feature>
<feature type="domain" description="LDL-receptor class A 8" evidence="6">
    <location>
        <begin position="316"/>
        <end position="355"/>
    </location>
</feature>
<feature type="domain" description="EGF-like 1" evidence="5">
    <location>
        <begin position="356"/>
        <end position="395"/>
    </location>
</feature>
<feature type="domain" description="EGF-like 2; calcium-binding" evidence="5">
    <location>
        <begin position="396"/>
        <end position="435"/>
    </location>
</feature>
<feature type="repeat" description="LDL-receptor class B 1">
    <location>
        <begin position="439"/>
        <end position="480"/>
    </location>
</feature>
<feature type="repeat" description="LDL-receptor class B 2">
    <location>
        <begin position="481"/>
        <end position="524"/>
    </location>
</feature>
<feature type="repeat" description="LDL-receptor class B 3">
    <location>
        <begin position="525"/>
        <end position="567"/>
    </location>
</feature>
<feature type="repeat" description="LDL-receptor class B 4">
    <location>
        <begin position="568"/>
        <end position="611"/>
    </location>
</feature>
<feature type="repeat" description="LDL-receptor class B 5">
    <location>
        <begin position="612"/>
        <end position="654"/>
    </location>
</feature>
<feature type="repeat" description="LDL-receptor class B 6">
    <location>
        <begin position="655"/>
        <end position="697"/>
    </location>
</feature>
<feature type="domain" description="EGF-like 3" evidence="5">
    <location>
        <begin position="702"/>
        <end position="750"/>
    </location>
</feature>
<feature type="region of interest" description="Clustered O-linked oligosaccharides">
    <location>
        <begin position="751"/>
        <end position="790"/>
    </location>
</feature>
<feature type="short sequence motif" description="Endocytosis signal" evidence="4">
    <location>
        <begin position="832"/>
        <end position="837"/>
    </location>
</feature>
<feature type="glycosylation site" description="N-linked (GlcNAc...) asparagine" evidence="4">
    <location>
        <position position="151"/>
    </location>
</feature>
<feature type="glycosylation site" description="N-linked (GlcNAc...) asparagine" evidence="4">
    <location>
        <position position="765"/>
    </location>
</feature>
<feature type="glycosylation site" description="N-linked (GlcNAc...) asparagine" evidence="4">
    <location>
        <position position="781"/>
    </location>
</feature>
<feature type="disulfide bond" evidence="1">
    <location>
        <begin position="33"/>
        <end position="45"/>
    </location>
</feature>
<feature type="disulfide bond" evidence="1">
    <location>
        <begin position="40"/>
        <end position="58"/>
    </location>
</feature>
<feature type="disulfide bond" evidence="1">
    <location>
        <begin position="52"/>
        <end position="67"/>
    </location>
</feature>
<feature type="disulfide bond" evidence="1">
    <location>
        <begin position="72"/>
        <end position="84"/>
    </location>
</feature>
<feature type="disulfide bond" evidence="1">
    <location>
        <begin position="79"/>
        <end position="97"/>
    </location>
</feature>
<feature type="disulfide bond" evidence="1">
    <location>
        <begin position="91"/>
        <end position="108"/>
    </location>
</feature>
<feature type="disulfide bond" evidence="1">
    <location>
        <begin position="113"/>
        <end position="127"/>
    </location>
</feature>
<feature type="disulfide bond" evidence="1">
    <location>
        <begin position="120"/>
        <end position="140"/>
    </location>
</feature>
<feature type="disulfide bond" evidence="1">
    <location>
        <begin position="134"/>
        <end position="149"/>
    </location>
</feature>
<feature type="disulfide bond" evidence="1">
    <location>
        <begin position="154"/>
        <end position="166"/>
    </location>
</feature>
<feature type="disulfide bond" evidence="1">
    <location>
        <begin position="161"/>
        <end position="179"/>
    </location>
</feature>
<feature type="disulfide bond" evidence="1">
    <location>
        <begin position="173"/>
        <end position="188"/>
    </location>
</feature>
<feature type="disulfide bond" evidence="1">
    <location>
        <begin position="193"/>
        <end position="205"/>
    </location>
</feature>
<feature type="disulfide bond" evidence="1">
    <location>
        <begin position="200"/>
        <end position="218"/>
    </location>
</feature>
<feature type="disulfide bond" evidence="1">
    <location>
        <begin position="212"/>
        <end position="229"/>
    </location>
</feature>
<feature type="disulfide bond" evidence="1">
    <location>
        <begin position="239"/>
        <end position="251"/>
    </location>
</feature>
<feature type="disulfide bond" evidence="1">
    <location>
        <begin position="246"/>
        <end position="264"/>
    </location>
</feature>
<feature type="disulfide bond" evidence="1">
    <location>
        <begin position="258"/>
        <end position="273"/>
    </location>
</feature>
<feature type="disulfide bond" evidence="1">
    <location>
        <begin position="278"/>
        <end position="290"/>
    </location>
</feature>
<feature type="disulfide bond" evidence="1">
    <location>
        <begin position="285"/>
        <end position="303"/>
    </location>
</feature>
<feature type="disulfide bond" evidence="1">
    <location>
        <begin position="297"/>
        <end position="312"/>
    </location>
</feature>
<feature type="disulfide bond" evidence="1">
    <location>
        <begin position="318"/>
        <end position="331"/>
    </location>
</feature>
<feature type="disulfide bond" evidence="1">
    <location>
        <begin position="326"/>
        <end position="344"/>
    </location>
</feature>
<feature type="disulfide bond" evidence="1">
    <location>
        <begin position="338"/>
        <end position="355"/>
    </location>
</feature>
<feature type="disulfide bond" evidence="1">
    <location>
        <begin position="360"/>
        <end position="371"/>
    </location>
</feature>
<feature type="disulfide bond" evidence="1">
    <location>
        <begin position="367"/>
        <end position="380"/>
    </location>
</feature>
<feature type="disulfide bond" evidence="1">
    <location>
        <begin position="382"/>
        <end position="394"/>
    </location>
</feature>
<feature type="disulfide bond" evidence="1">
    <location>
        <begin position="400"/>
        <end position="410"/>
    </location>
</feature>
<feature type="disulfide bond" evidence="1">
    <location>
        <begin position="406"/>
        <end position="419"/>
    </location>
</feature>
<feature type="disulfide bond" evidence="1">
    <location>
        <begin position="421"/>
        <end position="434"/>
    </location>
</feature>
<feature type="disulfide bond" evidence="1">
    <location>
        <begin position="706"/>
        <end position="719"/>
    </location>
</feature>
<feature type="disulfide bond" evidence="1">
    <location>
        <begin position="715"/>
        <end position="734"/>
    </location>
</feature>
<feature type="disulfide bond" evidence="1">
    <location>
        <begin position="736"/>
        <end position="749"/>
    </location>
</feature>
<feature type="cross-link" description="Glycyl lysine isopeptide (Lys-Gly) (interchain with G-Cter in ubiquitin)" evidence="2">
    <location>
        <position position="839"/>
    </location>
</feature>
<evidence type="ECO:0000250" key="1"/>
<evidence type="ECO:0000250" key="2">
    <source>
        <dbReference type="UniProtKB" id="P98155"/>
    </source>
</evidence>
<evidence type="ECO:0000250" key="3">
    <source>
        <dbReference type="UniProtKB" id="P98156"/>
    </source>
</evidence>
<evidence type="ECO:0000255" key="4"/>
<evidence type="ECO:0000255" key="5">
    <source>
        <dbReference type="PROSITE-ProRule" id="PRU00076"/>
    </source>
</evidence>
<evidence type="ECO:0000255" key="6">
    <source>
        <dbReference type="PROSITE-ProRule" id="PRU00124"/>
    </source>
</evidence>
<protein>
    <recommendedName>
        <fullName>Very low-density lipoprotein receptor</fullName>
        <shortName>VLDL receptor</shortName>
        <shortName>VLDL-R</shortName>
    </recommendedName>
</protein>
<reference key="1">
    <citation type="journal article" date="1994" name="J. Biol. Chem.">
        <title>Regulation of the very low density lipoprotein receptor by thyroid hormone in rat skeletal muscle.</title>
        <authorList>
            <person name="Jokinen E.V."/>
            <person name="Landschulz K.T."/>
            <person name="Wyne K.L."/>
            <person name="Ho Y.K."/>
            <person name="Frykman P.K."/>
            <person name="Hobbs H.H."/>
        </authorList>
    </citation>
    <scope>NUCLEOTIDE SEQUENCE [MRNA]</scope>
    <source>
        <tissue>Brain</tissue>
    </source>
</reference>
<keyword id="KW-0153">Cholesterol metabolism</keyword>
<keyword id="KW-0168">Coated pit</keyword>
<keyword id="KW-1015">Disulfide bond</keyword>
<keyword id="KW-0245">EGF-like domain</keyword>
<keyword id="KW-0254">Endocytosis</keyword>
<keyword id="KW-0325">Glycoprotein</keyword>
<keyword id="KW-1017">Isopeptide bond</keyword>
<keyword id="KW-0443">Lipid metabolism</keyword>
<keyword id="KW-0445">Lipid transport</keyword>
<keyword id="KW-0472">Membrane</keyword>
<keyword id="KW-0675">Receptor</keyword>
<keyword id="KW-1185">Reference proteome</keyword>
<keyword id="KW-0677">Repeat</keyword>
<keyword id="KW-0732">Signal</keyword>
<keyword id="KW-0753">Steroid metabolism</keyword>
<keyword id="KW-1207">Sterol metabolism</keyword>
<keyword id="KW-0812">Transmembrane</keyword>
<keyword id="KW-1133">Transmembrane helix</keyword>
<keyword id="KW-0813">Transport</keyword>
<keyword id="KW-0832">Ubl conjugation</keyword>
<keyword id="KW-0850">VLDL</keyword>
<gene>
    <name type="primary">Vldlr</name>
</gene>
<organism>
    <name type="scientific">Rattus norvegicus</name>
    <name type="common">Rat</name>
    <dbReference type="NCBI Taxonomy" id="10116"/>
    <lineage>
        <taxon>Eukaryota</taxon>
        <taxon>Metazoa</taxon>
        <taxon>Chordata</taxon>
        <taxon>Craniata</taxon>
        <taxon>Vertebrata</taxon>
        <taxon>Euteleostomi</taxon>
        <taxon>Mammalia</taxon>
        <taxon>Eutheria</taxon>
        <taxon>Euarchontoglires</taxon>
        <taxon>Glires</taxon>
        <taxon>Rodentia</taxon>
        <taxon>Myomorpha</taxon>
        <taxon>Muroidea</taxon>
        <taxon>Muridae</taxon>
        <taxon>Murinae</taxon>
        <taxon>Rattus</taxon>
    </lineage>
</organism>
<sequence length="873" mass="96542">MGTSARWALWLLLALCWAPRDSGATASGKKAKCDSSQFQCTNGRCITLLWKCDGDEDCTDGSDEKNCVKKTCAESDFVCKNGQCVPNRWQCDGDPDCEDGSDESPEQCHMRTCRINEISCGARSTQCIPESWRCDGENDCDNGEDEENCGNITCSADEFTCSSGRCVSRNFVCNGQDDCDDGSDELDCAPPTCGAHEFQCRTSSCIPLSWVCDDDADCSDQSDESLEQCGRQPVIHTKCPTSEIQCGSGECIHKKWRCDGDPDCKDGSDEVNCPSRTCRPDQFECEDGSCIHGSRQCNGIRDCVDGSDEVNCKNVNQCLGPGKFKCRSGECIDITKVCDQEQDCRDWSDEPLKECHINECLVNNGGCSHICKDLVIGYECDCAAGFELIDRKTCGDIDECQNPGICSQICINLKGGYKCECSRGYQMDLATGVCKAVGKEPSLIFTNRRDIRKIGLERKEYIQLVEQLRNTVALDADIAAQKLFWADLSQKAIFSASIDDKVGRHFKMIDNVYNPAAIAVDWVYKTIYWTDAASKTISVATLDGTKRKFLFNSDLREPASIAVDPLSGFVYWSDWGEPAKIEKAGMNGFDRRPLVTEDIQWPNGITLDLVKSRLYWLDSKLHMLSSVDLNGQDRRIVLKSLEFLAHPLALTIFEDRVYWIDGENEAVYGANKFTGSELATLVNNLNDAQDIIIYHELVQPSGKNWCEEDMENGGCEYLCLPAPQINDHSPKYTCSCPNGYNLEENGRECQSTSTPVTYSETKDVNTTDILRTSGLVPGGINVTTAVSEVSVPPKGTSAAWAILPLLLLVMAAVGGYLMWRNWQHKNMKSMNFDNPVYLKTTEEDLSIDIGRHSASVGHTYPAISVVSTDDDLA</sequence>